<reference key="1">
    <citation type="journal article" date="2005" name="Nature">
        <title>The genome of the social amoeba Dictyostelium discoideum.</title>
        <authorList>
            <person name="Eichinger L."/>
            <person name="Pachebat J.A."/>
            <person name="Gloeckner G."/>
            <person name="Rajandream M.A."/>
            <person name="Sucgang R."/>
            <person name="Berriman M."/>
            <person name="Song J."/>
            <person name="Olsen R."/>
            <person name="Szafranski K."/>
            <person name="Xu Q."/>
            <person name="Tunggal B."/>
            <person name="Kummerfeld S."/>
            <person name="Madera M."/>
            <person name="Konfortov B.A."/>
            <person name="Rivero F."/>
            <person name="Bankier A.T."/>
            <person name="Lehmann R."/>
            <person name="Hamlin N."/>
            <person name="Davies R."/>
            <person name="Gaudet P."/>
            <person name="Fey P."/>
            <person name="Pilcher K."/>
            <person name="Chen G."/>
            <person name="Saunders D."/>
            <person name="Sodergren E.J."/>
            <person name="Davis P."/>
            <person name="Kerhornou A."/>
            <person name="Nie X."/>
            <person name="Hall N."/>
            <person name="Anjard C."/>
            <person name="Hemphill L."/>
            <person name="Bason N."/>
            <person name="Farbrother P."/>
            <person name="Desany B."/>
            <person name="Just E."/>
            <person name="Morio T."/>
            <person name="Rost R."/>
            <person name="Churcher C.M."/>
            <person name="Cooper J."/>
            <person name="Haydock S."/>
            <person name="van Driessche N."/>
            <person name="Cronin A."/>
            <person name="Goodhead I."/>
            <person name="Muzny D.M."/>
            <person name="Mourier T."/>
            <person name="Pain A."/>
            <person name="Lu M."/>
            <person name="Harper D."/>
            <person name="Lindsay R."/>
            <person name="Hauser H."/>
            <person name="James K.D."/>
            <person name="Quiles M."/>
            <person name="Madan Babu M."/>
            <person name="Saito T."/>
            <person name="Buchrieser C."/>
            <person name="Wardroper A."/>
            <person name="Felder M."/>
            <person name="Thangavelu M."/>
            <person name="Johnson D."/>
            <person name="Knights A."/>
            <person name="Loulseged H."/>
            <person name="Mungall K.L."/>
            <person name="Oliver K."/>
            <person name="Price C."/>
            <person name="Quail M.A."/>
            <person name="Urushihara H."/>
            <person name="Hernandez J."/>
            <person name="Rabbinowitsch E."/>
            <person name="Steffen D."/>
            <person name="Sanders M."/>
            <person name="Ma J."/>
            <person name="Kohara Y."/>
            <person name="Sharp S."/>
            <person name="Simmonds M.N."/>
            <person name="Spiegler S."/>
            <person name="Tivey A."/>
            <person name="Sugano S."/>
            <person name="White B."/>
            <person name="Walker D."/>
            <person name="Woodward J.R."/>
            <person name="Winckler T."/>
            <person name="Tanaka Y."/>
            <person name="Shaulsky G."/>
            <person name="Schleicher M."/>
            <person name="Weinstock G.M."/>
            <person name="Rosenthal A."/>
            <person name="Cox E.C."/>
            <person name="Chisholm R.L."/>
            <person name="Gibbs R.A."/>
            <person name="Loomis W.F."/>
            <person name="Platzer M."/>
            <person name="Kay R.R."/>
            <person name="Williams J.G."/>
            <person name="Dear P.H."/>
            <person name="Noegel A.A."/>
            <person name="Barrell B.G."/>
            <person name="Kuspa A."/>
        </authorList>
    </citation>
    <scope>NUCLEOTIDE SEQUENCE [LARGE SCALE GENOMIC DNA]</scope>
    <source>
        <strain>AX4</strain>
    </source>
</reference>
<proteinExistence type="inferred from homology"/>
<keyword id="KW-0458">Lysosome</keyword>
<keyword id="KW-0472">Membrane</keyword>
<keyword id="KW-1185">Reference proteome</keyword>
<keyword id="KW-0677">Repeat</keyword>
<keyword id="KW-0769">Symport</keyword>
<keyword id="KW-0812">Transmembrane</keyword>
<keyword id="KW-1133">Transmembrane helix</keyword>
<keyword id="KW-0813">Transport</keyword>
<accession>Q54WT7</accession>
<feature type="chain" id="PRO_0000328325" description="Cystinosin homolog">
    <location>
        <begin position="1"/>
        <end position="284"/>
    </location>
</feature>
<feature type="transmembrane region" description="Helical" evidence="2">
    <location>
        <begin position="3"/>
        <end position="23"/>
    </location>
</feature>
<feature type="transmembrane region" description="Helical" evidence="2">
    <location>
        <begin position="37"/>
        <end position="57"/>
    </location>
</feature>
<feature type="transmembrane region" description="Helical" evidence="2">
    <location>
        <begin position="86"/>
        <end position="106"/>
    </location>
</feature>
<feature type="transmembrane region" description="Helical" evidence="2">
    <location>
        <begin position="116"/>
        <end position="136"/>
    </location>
</feature>
<feature type="transmembrane region" description="Helical" evidence="2">
    <location>
        <begin position="139"/>
        <end position="159"/>
    </location>
</feature>
<feature type="transmembrane region" description="Helical" evidence="2">
    <location>
        <begin position="181"/>
        <end position="201"/>
    </location>
</feature>
<feature type="transmembrane region" description="Helical" evidence="2">
    <location>
        <begin position="216"/>
        <end position="236"/>
    </location>
</feature>
<feature type="domain" description="PQ-loop 1">
    <location>
        <begin position="4"/>
        <end position="70"/>
    </location>
</feature>
<feature type="domain" description="PQ-loop 2">
    <location>
        <begin position="154"/>
        <end position="208"/>
    </location>
</feature>
<feature type="region of interest" description="Disordered" evidence="3">
    <location>
        <begin position="247"/>
        <end position="269"/>
    </location>
</feature>
<sequence length="284" mass="32514">MSALSIISIIIGWIYFACWSLSFYPQVILNFRKKNVIGLSFDFLLFNITGYACYSVFNSVLYFDKLVKNEYYDKYGPPIPVQQSDIAFAIHGFVLTAITIIQCFIYDRGNQKNSKLGIGIATLIWVSLIVMTILGFSNVFTWLWVINYYSYVKLFITFIKYIPQAYLNFKNKSTSGWSVHNVLLDFSGGVLSLLQMFLDVADSGNWNIFTGDPVKLGLSLFSIAFDILFIIQHYILYRNPKSKGYQNLNDNNIPNNNNNNNNNINNNTPHQIIINNSLIGEEDQ</sequence>
<comment type="function">
    <text evidence="1">Cystine/H(+) symporter that mediates export of cystine, the oxidized dimer of cysteine, from lysosomes.</text>
</comment>
<comment type="catalytic activity">
    <reaction evidence="1">
        <text>L-cystine(out) + H(+)(out) = L-cystine(in) + H(+)(in)</text>
        <dbReference type="Rhea" id="RHEA:66172"/>
        <dbReference type="ChEBI" id="CHEBI:15378"/>
        <dbReference type="ChEBI" id="CHEBI:35491"/>
    </reaction>
    <physiologicalReaction direction="left-to-right" evidence="1">
        <dbReference type="Rhea" id="RHEA:66173"/>
    </physiologicalReaction>
</comment>
<comment type="subcellular location">
    <subcellularLocation>
        <location evidence="1">Lysosome membrane</location>
        <topology evidence="2">Multi-pass membrane protein</topology>
    </subcellularLocation>
</comment>
<comment type="similarity">
    <text evidence="4">Belongs to the cystinosin family.</text>
</comment>
<dbReference type="EMBL" id="AAFI02000031">
    <property type="protein sequence ID" value="EAL67661.1"/>
    <property type="molecule type" value="Genomic_DNA"/>
</dbReference>
<dbReference type="RefSeq" id="XP_641630.1">
    <property type="nucleotide sequence ID" value="XM_636538.1"/>
</dbReference>
<dbReference type="SMR" id="Q54WT7"/>
<dbReference type="FunCoup" id="Q54WT7">
    <property type="interactions" value="264"/>
</dbReference>
<dbReference type="STRING" id="44689.Q54WT7"/>
<dbReference type="PaxDb" id="44689-DDB0237502"/>
<dbReference type="EnsemblProtists" id="EAL67661">
    <property type="protein sequence ID" value="EAL67661"/>
    <property type="gene ID" value="DDB_G0279445"/>
</dbReference>
<dbReference type="GeneID" id="8622036"/>
<dbReference type="KEGG" id="ddi:DDB_G0279445"/>
<dbReference type="dictyBase" id="DDB_G0279445">
    <property type="gene designation" value="ctns"/>
</dbReference>
<dbReference type="VEuPathDB" id="AmoebaDB:DDB_G0279445"/>
<dbReference type="eggNOG" id="KOG3145">
    <property type="taxonomic scope" value="Eukaryota"/>
</dbReference>
<dbReference type="HOGENOM" id="CLU_046327_0_0_1"/>
<dbReference type="InParanoid" id="Q54WT7"/>
<dbReference type="OMA" id="WIDVIYT"/>
<dbReference type="PhylomeDB" id="Q54WT7"/>
<dbReference type="Reactome" id="R-DDI-425393">
    <property type="pathway name" value="Transport of inorganic cations/anions and amino acids/oligopeptides"/>
</dbReference>
<dbReference type="Reactome" id="R-DDI-5223345">
    <property type="pathway name" value="Miscellaneous transport and binding events"/>
</dbReference>
<dbReference type="PRO" id="PR:Q54WT7"/>
<dbReference type="Proteomes" id="UP000002195">
    <property type="component" value="Chromosome 3"/>
</dbReference>
<dbReference type="GO" id="GO:0005765">
    <property type="term" value="C:lysosomal membrane"/>
    <property type="evidence" value="ECO:0007669"/>
    <property type="project" value="UniProtKB-SubCell"/>
</dbReference>
<dbReference type="GO" id="GO:0005774">
    <property type="term" value="C:vacuolar membrane"/>
    <property type="evidence" value="ECO:0000318"/>
    <property type="project" value="GO_Central"/>
</dbReference>
<dbReference type="GO" id="GO:0015184">
    <property type="term" value="F:L-cystine transmembrane transporter activity"/>
    <property type="evidence" value="ECO:0000318"/>
    <property type="project" value="GO_Central"/>
</dbReference>
<dbReference type="GO" id="GO:0015293">
    <property type="term" value="F:symporter activity"/>
    <property type="evidence" value="ECO:0007669"/>
    <property type="project" value="UniProtKB-KW"/>
</dbReference>
<dbReference type="GO" id="GO:0015811">
    <property type="term" value="P:L-cystine transport"/>
    <property type="evidence" value="ECO:0000318"/>
    <property type="project" value="GO_Central"/>
</dbReference>
<dbReference type="FunFam" id="1.20.1280.290:FF:000016">
    <property type="entry name" value="Cystinosin homolog"/>
    <property type="match status" value="1"/>
</dbReference>
<dbReference type="FunFam" id="1.20.1280.290:FF:000018">
    <property type="entry name" value="Cystinosin homolog"/>
    <property type="match status" value="1"/>
</dbReference>
<dbReference type="Gene3D" id="1.20.1280.290">
    <property type="match status" value="2"/>
</dbReference>
<dbReference type="InterPro" id="IPR005282">
    <property type="entry name" value="LC_transporter"/>
</dbReference>
<dbReference type="InterPro" id="IPR006603">
    <property type="entry name" value="PQ-loop_rpt"/>
</dbReference>
<dbReference type="NCBIfam" id="TIGR00951">
    <property type="entry name" value="2A43"/>
    <property type="match status" value="1"/>
</dbReference>
<dbReference type="PANTHER" id="PTHR13131">
    <property type="entry name" value="CYSTINOSIN"/>
    <property type="match status" value="1"/>
</dbReference>
<dbReference type="PANTHER" id="PTHR13131:SF5">
    <property type="entry name" value="CYSTINOSIN"/>
    <property type="match status" value="1"/>
</dbReference>
<dbReference type="Pfam" id="PF04193">
    <property type="entry name" value="PQ-loop"/>
    <property type="match status" value="2"/>
</dbReference>
<dbReference type="SMART" id="SM00679">
    <property type="entry name" value="CTNS"/>
    <property type="match status" value="2"/>
</dbReference>
<protein>
    <recommendedName>
        <fullName>Cystinosin homolog</fullName>
    </recommendedName>
</protein>
<organism>
    <name type="scientific">Dictyostelium discoideum</name>
    <name type="common">Social amoeba</name>
    <dbReference type="NCBI Taxonomy" id="44689"/>
    <lineage>
        <taxon>Eukaryota</taxon>
        <taxon>Amoebozoa</taxon>
        <taxon>Evosea</taxon>
        <taxon>Eumycetozoa</taxon>
        <taxon>Dictyostelia</taxon>
        <taxon>Dictyosteliales</taxon>
        <taxon>Dictyosteliaceae</taxon>
        <taxon>Dictyostelium</taxon>
    </lineage>
</organism>
<evidence type="ECO:0000250" key="1">
    <source>
        <dbReference type="UniProtKB" id="O60931"/>
    </source>
</evidence>
<evidence type="ECO:0000255" key="2"/>
<evidence type="ECO:0000256" key="3">
    <source>
        <dbReference type="SAM" id="MobiDB-lite"/>
    </source>
</evidence>
<evidence type="ECO:0000305" key="4"/>
<name>CTNS_DICDI</name>
<gene>
    <name type="primary">ctns</name>
    <name type="ORF">DDB_G0279445</name>
</gene>